<reference key="1">
    <citation type="journal article" date="2002" name="Nature">
        <title>Genome sequence of the plant pathogen Ralstonia solanacearum.</title>
        <authorList>
            <person name="Salanoubat M."/>
            <person name="Genin S."/>
            <person name="Artiguenave F."/>
            <person name="Gouzy J."/>
            <person name="Mangenot S."/>
            <person name="Arlat M."/>
            <person name="Billault A."/>
            <person name="Brottier P."/>
            <person name="Camus J.-C."/>
            <person name="Cattolico L."/>
            <person name="Chandler M."/>
            <person name="Choisne N."/>
            <person name="Claudel-Renard C."/>
            <person name="Cunnac S."/>
            <person name="Demange N."/>
            <person name="Gaspin C."/>
            <person name="Lavie M."/>
            <person name="Moisan A."/>
            <person name="Robert C."/>
            <person name="Saurin W."/>
            <person name="Schiex T."/>
            <person name="Siguier P."/>
            <person name="Thebault P."/>
            <person name="Whalen M."/>
            <person name="Wincker P."/>
            <person name="Levy M."/>
            <person name="Weissenbach J."/>
            <person name="Boucher C.A."/>
        </authorList>
    </citation>
    <scope>NUCLEOTIDE SEQUENCE [LARGE SCALE GENOMIC DNA]</scope>
    <source>
        <strain>ATCC BAA-1114 / GMI1000</strain>
    </source>
</reference>
<protein>
    <recommendedName>
        <fullName>Probable UDP-N-acetylglucosamine 2-epimerase</fullName>
        <ecNumber>5.1.3.14</ecNumber>
    </recommendedName>
    <alternativeName>
        <fullName>UDP-GlcNAc-2-epimerase</fullName>
    </alternativeName>
</protein>
<dbReference type="EC" id="5.1.3.14"/>
<dbReference type="EMBL" id="AL646053">
    <property type="protein sequence ID" value="CAD18168.1"/>
    <property type="status" value="ALT_INIT"/>
    <property type="molecule type" value="Genomic_DNA"/>
</dbReference>
<dbReference type="SMR" id="P58600"/>
<dbReference type="STRING" id="267608.RSp1017"/>
<dbReference type="EnsemblBacteria" id="CAD18168">
    <property type="protein sequence ID" value="CAD18168"/>
    <property type="gene ID" value="RSp1017"/>
</dbReference>
<dbReference type="KEGG" id="rso:RSp1017"/>
<dbReference type="eggNOG" id="COG0381">
    <property type="taxonomic scope" value="Bacteria"/>
</dbReference>
<dbReference type="HOGENOM" id="CLU_041674_1_0_4"/>
<dbReference type="UniPathway" id="UPA00821"/>
<dbReference type="Proteomes" id="UP000001436">
    <property type="component" value="Plasmid megaplasmid Rsp"/>
</dbReference>
<dbReference type="GO" id="GO:0005737">
    <property type="term" value="C:cytoplasm"/>
    <property type="evidence" value="ECO:0007669"/>
    <property type="project" value="UniProtKB-SubCell"/>
</dbReference>
<dbReference type="GO" id="GO:0008761">
    <property type="term" value="F:UDP-N-acetylglucosamine 2-epimerase activity"/>
    <property type="evidence" value="ECO:0007669"/>
    <property type="project" value="UniProtKB-EC"/>
</dbReference>
<dbReference type="GO" id="GO:0009103">
    <property type="term" value="P:lipopolysaccharide biosynthetic process"/>
    <property type="evidence" value="ECO:0007669"/>
    <property type="project" value="UniProtKB-KW"/>
</dbReference>
<dbReference type="CDD" id="cd03786">
    <property type="entry name" value="GTB_UDP-GlcNAc_2-Epimerase"/>
    <property type="match status" value="1"/>
</dbReference>
<dbReference type="FunFam" id="3.40.50.2000:FF:000043">
    <property type="entry name" value="UDP-N-acetylglucosamine 2-epimerase"/>
    <property type="match status" value="1"/>
</dbReference>
<dbReference type="Gene3D" id="3.40.50.2000">
    <property type="entry name" value="Glycogen Phosphorylase B"/>
    <property type="match status" value="2"/>
</dbReference>
<dbReference type="InterPro" id="IPR003331">
    <property type="entry name" value="UDP_GlcNAc_Epimerase_2_dom"/>
</dbReference>
<dbReference type="InterPro" id="IPR029767">
    <property type="entry name" value="WecB-like"/>
</dbReference>
<dbReference type="NCBIfam" id="TIGR00236">
    <property type="entry name" value="wecB"/>
    <property type="match status" value="1"/>
</dbReference>
<dbReference type="PANTHER" id="PTHR43174">
    <property type="entry name" value="UDP-N-ACETYLGLUCOSAMINE 2-EPIMERASE"/>
    <property type="match status" value="1"/>
</dbReference>
<dbReference type="PANTHER" id="PTHR43174:SF2">
    <property type="entry name" value="UDP-N-ACETYLGLUCOSAMINE 2-EPIMERASE"/>
    <property type="match status" value="1"/>
</dbReference>
<dbReference type="Pfam" id="PF02350">
    <property type="entry name" value="Epimerase_2"/>
    <property type="match status" value="1"/>
</dbReference>
<dbReference type="SUPFAM" id="SSF53756">
    <property type="entry name" value="UDP-Glycosyltransferase/glycogen phosphorylase"/>
    <property type="match status" value="1"/>
</dbReference>
<sequence>MKKVLVVFGTRPEAIKMAPLVKALQADTSMQCGVCVTAQHREMLDQVLRLFDIRPDYDLNVMKPGQDLYELTSNILTGVKSVLESFAPDLVLVHGDTSTTLATTLAAYYKQVPVGHIEAGLRTGNLYSPWPEEANRKVTGSLAALHFAPTERSRRNLLNEGVPADAVVVTGNTVIDALLSVRQRLQTDTALCRHTASLIPYRIGERRIVLVTGHRRESFGDGFERICAALASIARAHPDVDIVYPVHLNPNVREPVGRLLKGIDNIHLIEPLDYLPFVYLMDKAHIILTDSGGIQEEAPSLGKPVLVMRDTTERPEAVEAGTVRLVGTSVDALVDSATTLLNDDSAYEAMSRAHNPYGDGAASARITRAIQAYFA</sequence>
<name>EPSC_RALN1</name>
<comment type="function">
    <text evidence="1">May be involved in synthesis of N-acetyltrideoxygalactose, a component of exopolysaccharide EPS I which functions as a virulence factor.</text>
</comment>
<comment type="catalytic activity">
    <reaction>
        <text>UDP-N-acetyl-alpha-D-glucosamine = UDP-N-acetyl-alpha-D-mannosamine</text>
        <dbReference type="Rhea" id="RHEA:17213"/>
        <dbReference type="ChEBI" id="CHEBI:57705"/>
        <dbReference type="ChEBI" id="CHEBI:68623"/>
        <dbReference type="EC" id="5.1.3.14"/>
    </reaction>
</comment>
<comment type="pathway">
    <text>Glycan metabolism; exopolysaccharide EPS I biosynthesis.</text>
</comment>
<comment type="subcellular location">
    <subcellularLocation>
        <location evidence="1">Cytoplasm</location>
    </subcellularLocation>
</comment>
<comment type="similarity">
    <text evidence="2">Belongs to the UDP-N-acetylglucosamine 2-epimerase family.</text>
</comment>
<comment type="sequence caution" evidence="2">
    <conflict type="erroneous initiation">
        <sequence resource="EMBL-CDS" id="CAD18168"/>
    </conflict>
</comment>
<proteinExistence type="inferred from homology"/>
<keyword id="KW-0963">Cytoplasm</keyword>
<keyword id="KW-0413">Isomerase</keyword>
<keyword id="KW-0448">Lipopolysaccharide biosynthesis</keyword>
<keyword id="KW-0614">Plasmid</keyword>
<keyword id="KW-1185">Reference proteome</keyword>
<keyword id="KW-0843">Virulence</keyword>
<accession>P58600</accession>
<feature type="chain" id="PRO_0000208524" description="Probable UDP-N-acetylglucosamine 2-epimerase">
    <location>
        <begin position="1"/>
        <end position="375"/>
    </location>
</feature>
<organism>
    <name type="scientific">Ralstonia nicotianae (strain ATCC BAA-1114 / GMI1000)</name>
    <name type="common">Ralstonia solanacearum</name>
    <dbReference type="NCBI Taxonomy" id="267608"/>
    <lineage>
        <taxon>Bacteria</taxon>
        <taxon>Pseudomonadati</taxon>
        <taxon>Pseudomonadota</taxon>
        <taxon>Betaproteobacteria</taxon>
        <taxon>Burkholderiales</taxon>
        <taxon>Burkholderiaceae</taxon>
        <taxon>Ralstonia</taxon>
        <taxon>Ralstonia solanacearum species complex</taxon>
    </lineage>
</organism>
<geneLocation type="plasmid">
    <name>megaplasmid Rsp</name>
</geneLocation>
<evidence type="ECO:0000250" key="1"/>
<evidence type="ECO:0000305" key="2"/>
<gene>
    <name type="primary">epsC</name>
    <name type="ordered locus">RSp1017</name>
    <name type="ORF">RS02355</name>
</gene>